<comment type="subcellular location">
    <subcellularLocation>
        <location evidence="1">Membrane</location>
        <topology evidence="1">Multi-pass membrane protein</topology>
    </subcellularLocation>
</comment>
<comment type="alternative products">
    <event type="alternative splicing"/>
    <isoform>
        <id>F4JH46-1</id>
        <name>1</name>
        <sequence type="displayed"/>
    </isoform>
    <isoform>
        <id>F4JH46-2</id>
        <name>2</name>
        <sequence type="described" ref="VSP_057896"/>
    </isoform>
</comment>
<comment type="miscellaneous">
    <molecule>Isoform 2</molecule>
    <text evidence="3">May be due to a competing donor splice site.</text>
</comment>
<comment type="similarity">
    <text evidence="3">Belongs to the multi antimicrobial extrusion (MATE) (TC 2.A.66.1) family.</text>
</comment>
<comment type="sequence caution" evidence="3">
    <conflict type="erroneous gene model prediction">
        <sequence resource="EMBL-CDS" id="AAB62839"/>
    </conflict>
    <text>The predicted gene At4g00350 has been split into 2 genes: At4g00350 and At4g00355.</text>
</comment>
<comment type="sequence caution" evidence="3">
    <conflict type="erroneous gene model prediction">
        <sequence resource="EMBL-CDS" id="AAF02797"/>
    </conflict>
    <text>The predicted gene At4g00350 has been split into 2 genes: At4g00350 and At4g00355.</text>
</comment>
<comment type="sequence caution" evidence="3">
    <conflict type="erroneous gene model prediction">
        <sequence resource="EMBL-CDS" id="CAB80793"/>
    </conflict>
    <text>The predicted gene At4g00350 has been split into 2 genes: At4g00350 and At4g00355.</text>
</comment>
<feature type="chain" id="PRO_0000434075" description="Protein DETOXIFICATION 34">
    <location>
        <begin position="1"/>
        <end position="542"/>
    </location>
</feature>
<feature type="transmembrane region" description="Helical" evidence="1">
    <location>
        <begin position="97"/>
        <end position="117"/>
    </location>
</feature>
<feature type="transmembrane region" description="Helical" evidence="1">
    <location>
        <begin position="127"/>
        <end position="147"/>
    </location>
</feature>
<feature type="transmembrane region" description="Helical" evidence="1">
    <location>
        <begin position="176"/>
        <end position="196"/>
    </location>
</feature>
<feature type="transmembrane region" description="Helical" evidence="1">
    <location>
        <begin position="204"/>
        <end position="224"/>
    </location>
</feature>
<feature type="transmembrane region" description="Helical" evidence="1">
    <location>
        <begin position="240"/>
        <end position="260"/>
    </location>
</feature>
<feature type="transmembrane region" description="Helical" evidence="1">
    <location>
        <begin position="272"/>
        <end position="292"/>
    </location>
</feature>
<feature type="transmembrane region" description="Helical" evidence="1">
    <location>
        <begin position="316"/>
        <end position="336"/>
    </location>
</feature>
<feature type="transmembrane region" description="Helical" evidence="1">
    <location>
        <begin position="344"/>
        <end position="364"/>
    </location>
</feature>
<feature type="transmembrane region" description="Helical" evidence="1">
    <location>
        <begin position="390"/>
        <end position="410"/>
    </location>
</feature>
<feature type="transmembrane region" description="Helical" evidence="1">
    <location>
        <begin position="435"/>
        <end position="455"/>
    </location>
</feature>
<feature type="transmembrane region" description="Helical" evidence="1">
    <location>
        <begin position="462"/>
        <end position="482"/>
    </location>
</feature>
<feature type="transmembrane region" description="Helical" evidence="1">
    <location>
        <begin position="491"/>
        <end position="511"/>
    </location>
</feature>
<feature type="splice variant" id="VSP_057896" description="In isoform 2.">
    <location>
        <begin position="111"/>
        <end position="138"/>
    </location>
</feature>
<feature type="sequence conflict" description="In Ref. 3; AAO42212." evidence="3" ref="3">
    <original>A</original>
    <variation>V</variation>
    <location>
        <position position="385"/>
    </location>
</feature>
<name>DTX34_ARATH</name>
<accession>F4JH46</accession>
<accession>O23067</accession>
<accession>Q84W63</accession>
<dbReference type="EMBL" id="AF013293">
    <property type="protein sequence ID" value="AAB62839.1"/>
    <property type="status" value="ALT_SEQ"/>
    <property type="molecule type" value="Genomic_DNA"/>
</dbReference>
<dbReference type="EMBL" id="AF195115">
    <property type="protein sequence ID" value="AAF02797.1"/>
    <property type="status" value="ALT_SEQ"/>
    <property type="molecule type" value="Genomic_DNA"/>
</dbReference>
<dbReference type="EMBL" id="AL161471">
    <property type="protein sequence ID" value="CAB80793.1"/>
    <property type="status" value="ALT_SEQ"/>
    <property type="molecule type" value="Genomic_DNA"/>
</dbReference>
<dbReference type="EMBL" id="CP002687">
    <property type="protein sequence ID" value="AEE81864.1"/>
    <property type="molecule type" value="Genomic_DNA"/>
</dbReference>
<dbReference type="EMBL" id="BT004194">
    <property type="protein sequence ID" value="AAO42212.1"/>
    <property type="molecule type" value="mRNA"/>
</dbReference>
<dbReference type="EMBL" id="BX826625">
    <property type="status" value="NOT_ANNOTATED_CDS"/>
    <property type="molecule type" value="mRNA"/>
</dbReference>
<dbReference type="PIR" id="T01536">
    <property type="entry name" value="T01536"/>
</dbReference>
<dbReference type="RefSeq" id="NP_567173.3">
    <molecule id="F4JH46-1"/>
    <property type="nucleotide sequence ID" value="NM_116258.4"/>
</dbReference>
<dbReference type="SMR" id="F4JH46"/>
<dbReference type="IntAct" id="F4JH46">
    <property type="interactions" value="24"/>
</dbReference>
<dbReference type="STRING" id="3702.F4JH46"/>
<dbReference type="PaxDb" id="3702-AT4G00350.1"/>
<dbReference type="ProteomicsDB" id="220714">
    <molecule id="F4JH46-1"/>
</dbReference>
<dbReference type="EnsemblPlants" id="AT4G00350.1">
    <molecule id="F4JH46-1"/>
    <property type="protein sequence ID" value="AT4G00350.1"/>
    <property type="gene ID" value="AT4G00350"/>
</dbReference>
<dbReference type="GeneID" id="827306"/>
<dbReference type="Gramene" id="AT4G00350.1">
    <molecule id="F4JH46-1"/>
    <property type="protein sequence ID" value="AT4G00350.1"/>
    <property type="gene ID" value="AT4G00350"/>
</dbReference>
<dbReference type="KEGG" id="ath:AT4G00350"/>
<dbReference type="Araport" id="AT4G00350"/>
<dbReference type="TAIR" id="AT4G00350"/>
<dbReference type="eggNOG" id="KOG1347">
    <property type="taxonomic scope" value="Eukaryota"/>
</dbReference>
<dbReference type="HOGENOM" id="CLU_012893_1_4_1"/>
<dbReference type="InParanoid" id="F4JH46"/>
<dbReference type="OMA" id="AILMYMV"/>
<dbReference type="PRO" id="PR:F4JH46"/>
<dbReference type="Proteomes" id="UP000006548">
    <property type="component" value="Chromosome 4"/>
</dbReference>
<dbReference type="ExpressionAtlas" id="F4JH46">
    <property type="expression patterns" value="baseline and differential"/>
</dbReference>
<dbReference type="GO" id="GO:0016020">
    <property type="term" value="C:membrane"/>
    <property type="evidence" value="ECO:0007669"/>
    <property type="project" value="UniProtKB-SubCell"/>
</dbReference>
<dbReference type="GO" id="GO:0015297">
    <property type="term" value="F:antiporter activity"/>
    <property type="evidence" value="ECO:0007669"/>
    <property type="project" value="InterPro"/>
</dbReference>
<dbReference type="GO" id="GO:0042910">
    <property type="term" value="F:xenobiotic transmembrane transporter activity"/>
    <property type="evidence" value="ECO:0007669"/>
    <property type="project" value="InterPro"/>
</dbReference>
<dbReference type="GO" id="GO:1990961">
    <property type="term" value="P:xenobiotic detoxification by transmembrane export across the plasma membrane"/>
    <property type="evidence" value="ECO:0007669"/>
    <property type="project" value="InterPro"/>
</dbReference>
<dbReference type="CDD" id="cd13132">
    <property type="entry name" value="MATE_eukaryotic"/>
    <property type="match status" value="1"/>
</dbReference>
<dbReference type="InterPro" id="IPR045069">
    <property type="entry name" value="MATE_euk"/>
</dbReference>
<dbReference type="InterPro" id="IPR002528">
    <property type="entry name" value="MATE_fam"/>
</dbReference>
<dbReference type="NCBIfam" id="TIGR00797">
    <property type="entry name" value="matE"/>
    <property type="match status" value="1"/>
</dbReference>
<dbReference type="PANTHER" id="PTHR11206">
    <property type="entry name" value="MULTIDRUG RESISTANCE PROTEIN"/>
    <property type="match status" value="1"/>
</dbReference>
<dbReference type="Pfam" id="PF01554">
    <property type="entry name" value="MatE"/>
    <property type="match status" value="2"/>
</dbReference>
<protein>
    <recommendedName>
        <fullName evidence="2">Protein DETOXIFICATION 34</fullName>
        <shortName evidence="2">AtDTX34</shortName>
    </recommendedName>
    <alternativeName>
        <fullName evidence="3">Multidrug and toxic compound extrusion protein 34</fullName>
        <shortName evidence="3">MATE protein 34</shortName>
    </alternativeName>
</protein>
<evidence type="ECO:0000255" key="1"/>
<evidence type="ECO:0000303" key="2">
    <source>
    </source>
</evidence>
<evidence type="ECO:0000305" key="3"/>
<evidence type="ECO:0000312" key="4">
    <source>
        <dbReference type="Araport" id="AT4G00350"/>
    </source>
</evidence>
<evidence type="ECO:0000312" key="5">
    <source>
        <dbReference type="EMBL" id="AAB62839.1"/>
    </source>
</evidence>
<evidence type="ECO:0000312" key="6">
    <source>
        <dbReference type="EMBL" id="AAF02797.1"/>
    </source>
</evidence>
<gene>
    <name evidence="2" type="primary">DTX34</name>
    <name evidence="4" type="ordered locus">At4g00350</name>
    <name evidence="5" type="ORF">A_IG005I10.20</name>
    <name evidence="6" type="ORF">F5I10.20</name>
</gene>
<proteinExistence type="evidence at transcript level"/>
<reference key="1">
    <citation type="journal article" date="1999" name="Nature">
        <title>Sequence and analysis of chromosome 4 of the plant Arabidopsis thaliana.</title>
        <authorList>
            <person name="Mayer K.F.X."/>
            <person name="Schueller C."/>
            <person name="Wambutt R."/>
            <person name="Murphy G."/>
            <person name="Volckaert G."/>
            <person name="Pohl T."/>
            <person name="Duesterhoeft A."/>
            <person name="Stiekema W."/>
            <person name="Entian K.-D."/>
            <person name="Terryn N."/>
            <person name="Harris B."/>
            <person name="Ansorge W."/>
            <person name="Brandt P."/>
            <person name="Grivell L.A."/>
            <person name="Rieger M."/>
            <person name="Weichselgartner M."/>
            <person name="de Simone V."/>
            <person name="Obermaier B."/>
            <person name="Mache R."/>
            <person name="Mueller M."/>
            <person name="Kreis M."/>
            <person name="Delseny M."/>
            <person name="Puigdomenech P."/>
            <person name="Watson M."/>
            <person name="Schmidtheini T."/>
            <person name="Reichert B."/>
            <person name="Portetelle D."/>
            <person name="Perez-Alonso M."/>
            <person name="Boutry M."/>
            <person name="Bancroft I."/>
            <person name="Vos P."/>
            <person name="Hoheisel J."/>
            <person name="Zimmermann W."/>
            <person name="Wedler H."/>
            <person name="Ridley P."/>
            <person name="Langham S.-A."/>
            <person name="McCullagh B."/>
            <person name="Bilham L."/>
            <person name="Robben J."/>
            <person name="van der Schueren J."/>
            <person name="Grymonprez B."/>
            <person name="Chuang Y.-J."/>
            <person name="Vandenbussche F."/>
            <person name="Braeken M."/>
            <person name="Weltjens I."/>
            <person name="Voet M."/>
            <person name="Bastiaens I."/>
            <person name="Aert R."/>
            <person name="Defoor E."/>
            <person name="Weitzenegger T."/>
            <person name="Bothe G."/>
            <person name="Ramsperger U."/>
            <person name="Hilbert H."/>
            <person name="Braun M."/>
            <person name="Holzer E."/>
            <person name="Brandt A."/>
            <person name="Peters S."/>
            <person name="van Staveren M."/>
            <person name="Dirkse W."/>
            <person name="Mooijman P."/>
            <person name="Klein Lankhorst R."/>
            <person name="Rose M."/>
            <person name="Hauf J."/>
            <person name="Koetter P."/>
            <person name="Berneiser S."/>
            <person name="Hempel S."/>
            <person name="Feldpausch M."/>
            <person name="Lamberth S."/>
            <person name="Van den Daele H."/>
            <person name="De Keyser A."/>
            <person name="Buysshaert C."/>
            <person name="Gielen J."/>
            <person name="Villarroel R."/>
            <person name="De Clercq R."/>
            <person name="van Montagu M."/>
            <person name="Rogers J."/>
            <person name="Cronin A."/>
            <person name="Quail M.A."/>
            <person name="Bray-Allen S."/>
            <person name="Clark L."/>
            <person name="Doggett J."/>
            <person name="Hall S."/>
            <person name="Kay M."/>
            <person name="Lennard N."/>
            <person name="McLay K."/>
            <person name="Mayes R."/>
            <person name="Pettett A."/>
            <person name="Rajandream M.A."/>
            <person name="Lyne M."/>
            <person name="Benes V."/>
            <person name="Rechmann S."/>
            <person name="Borkova D."/>
            <person name="Bloecker H."/>
            <person name="Scharfe M."/>
            <person name="Grimm M."/>
            <person name="Loehnert T.-H."/>
            <person name="Dose S."/>
            <person name="de Haan M."/>
            <person name="Maarse A.C."/>
            <person name="Schaefer M."/>
            <person name="Mueller-Auer S."/>
            <person name="Gabel C."/>
            <person name="Fuchs M."/>
            <person name="Fartmann B."/>
            <person name="Granderath K."/>
            <person name="Dauner D."/>
            <person name="Herzl A."/>
            <person name="Neumann S."/>
            <person name="Argiriou A."/>
            <person name="Vitale D."/>
            <person name="Liguori R."/>
            <person name="Piravandi E."/>
            <person name="Massenet O."/>
            <person name="Quigley F."/>
            <person name="Clabauld G."/>
            <person name="Muendlein A."/>
            <person name="Felber R."/>
            <person name="Schnabl S."/>
            <person name="Hiller R."/>
            <person name="Schmidt W."/>
            <person name="Lecharny A."/>
            <person name="Aubourg S."/>
            <person name="Chefdor F."/>
            <person name="Cooke R."/>
            <person name="Berger C."/>
            <person name="Monfort A."/>
            <person name="Casacuberta E."/>
            <person name="Gibbons T."/>
            <person name="Weber N."/>
            <person name="Vandenbol M."/>
            <person name="Bargues M."/>
            <person name="Terol J."/>
            <person name="Torres A."/>
            <person name="Perez-Perez A."/>
            <person name="Purnelle B."/>
            <person name="Bent E."/>
            <person name="Johnson S."/>
            <person name="Tacon D."/>
            <person name="Jesse T."/>
            <person name="Heijnen L."/>
            <person name="Schwarz S."/>
            <person name="Scholler P."/>
            <person name="Heber S."/>
            <person name="Francs P."/>
            <person name="Bielke C."/>
            <person name="Frishman D."/>
            <person name="Haase D."/>
            <person name="Lemcke K."/>
            <person name="Mewes H.-W."/>
            <person name="Stocker S."/>
            <person name="Zaccaria P."/>
            <person name="Bevan M."/>
            <person name="Wilson R.K."/>
            <person name="de la Bastide M."/>
            <person name="Habermann K."/>
            <person name="Parnell L."/>
            <person name="Dedhia N."/>
            <person name="Gnoj L."/>
            <person name="Schutz K."/>
            <person name="Huang E."/>
            <person name="Spiegel L."/>
            <person name="Sekhon M."/>
            <person name="Murray J."/>
            <person name="Sheet P."/>
            <person name="Cordes M."/>
            <person name="Abu-Threideh J."/>
            <person name="Stoneking T."/>
            <person name="Kalicki J."/>
            <person name="Graves T."/>
            <person name="Harmon G."/>
            <person name="Edwards J."/>
            <person name="Latreille P."/>
            <person name="Courtney L."/>
            <person name="Cloud J."/>
            <person name="Abbott A."/>
            <person name="Scott K."/>
            <person name="Johnson D."/>
            <person name="Minx P."/>
            <person name="Bentley D."/>
            <person name="Fulton B."/>
            <person name="Miller N."/>
            <person name="Greco T."/>
            <person name="Kemp K."/>
            <person name="Kramer J."/>
            <person name="Fulton L."/>
            <person name="Mardis E."/>
            <person name="Dante M."/>
            <person name="Pepin K."/>
            <person name="Hillier L.W."/>
            <person name="Nelson J."/>
            <person name="Spieth J."/>
            <person name="Ryan E."/>
            <person name="Andrews S."/>
            <person name="Geisel C."/>
            <person name="Layman D."/>
            <person name="Du H."/>
            <person name="Ali J."/>
            <person name="Berghoff A."/>
            <person name="Jones K."/>
            <person name="Drone K."/>
            <person name="Cotton M."/>
            <person name="Joshu C."/>
            <person name="Antonoiu B."/>
            <person name="Zidanic M."/>
            <person name="Strong C."/>
            <person name="Sun H."/>
            <person name="Lamar B."/>
            <person name="Yordan C."/>
            <person name="Ma P."/>
            <person name="Zhong J."/>
            <person name="Preston R."/>
            <person name="Vil D."/>
            <person name="Shekher M."/>
            <person name="Matero A."/>
            <person name="Shah R."/>
            <person name="Swaby I.K."/>
            <person name="O'Shaughnessy A."/>
            <person name="Rodriguez M."/>
            <person name="Hoffman J."/>
            <person name="Till S."/>
            <person name="Granat S."/>
            <person name="Shohdy N."/>
            <person name="Hasegawa A."/>
            <person name="Hameed A."/>
            <person name="Lodhi M."/>
            <person name="Johnson A."/>
            <person name="Chen E."/>
            <person name="Marra M.A."/>
            <person name="Martienssen R."/>
            <person name="McCombie W.R."/>
        </authorList>
    </citation>
    <scope>NUCLEOTIDE SEQUENCE [LARGE SCALE GENOMIC DNA]</scope>
    <source>
        <strain>cv. Columbia</strain>
    </source>
</reference>
<reference key="2">
    <citation type="journal article" date="2017" name="Plant J.">
        <title>Araport11: a complete reannotation of the Arabidopsis thaliana reference genome.</title>
        <authorList>
            <person name="Cheng C.Y."/>
            <person name="Krishnakumar V."/>
            <person name="Chan A.P."/>
            <person name="Thibaud-Nissen F."/>
            <person name="Schobel S."/>
            <person name="Town C.D."/>
        </authorList>
    </citation>
    <scope>GENOME REANNOTATION</scope>
    <source>
        <strain>cv. Columbia</strain>
    </source>
</reference>
<reference key="3">
    <citation type="journal article" date="2003" name="Science">
        <title>Empirical analysis of transcriptional activity in the Arabidopsis genome.</title>
        <authorList>
            <person name="Yamada K."/>
            <person name="Lim J."/>
            <person name="Dale J.M."/>
            <person name="Chen H."/>
            <person name="Shinn P."/>
            <person name="Palm C.J."/>
            <person name="Southwick A.M."/>
            <person name="Wu H.C."/>
            <person name="Kim C.J."/>
            <person name="Nguyen M."/>
            <person name="Pham P.K."/>
            <person name="Cheuk R.F."/>
            <person name="Karlin-Newmann G."/>
            <person name="Liu S.X."/>
            <person name="Lam B."/>
            <person name="Sakano H."/>
            <person name="Wu T."/>
            <person name="Yu G."/>
            <person name="Miranda M."/>
            <person name="Quach H.L."/>
            <person name="Tripp M."/>
            <person name="Chang C.H."/>
            <person name="Lee J.M."/>
            <person name="Toriumi M.J."/>
            <person name="Chan M.M."/>
            <person name="Tang C.C."/>
            <person name="Onodera C.S."/>
            <person name="Deng J.M."/>
            <person name="Akiyama K."/>
            <person name="Ansari Y."/>
            <person name="Arakawa T."/>
            <person name="Banh J."/>
            <person name="Banno F."/>
            <person name="Bowser L."/>
            <person name="Brooks S.Y."/>
            <person name="Carninci P."/>
            <person name="Chao Q."/>
            <person name="Choy N."/>
            <person name="Enju A."/>
            <person name="Goldsmith A.D."/>
            <person name="Gurjal M."/>
            <person name="Hansen N.F."/>
            <person name="Hayashizaki Y."/>
            <person name="Johnson-Hopson C."/>
            <person name="Hsuan V.W."/>
            <person name="Iida K."/>
            <person name="Karnes M."/>
            <person name="Khan S."/>
            <person name="Koesema E."/>
            <person name="Ishida J."/>
            <person name="Jiang P.X."/>
            <person name="Jones T."/>
            <person name="Kawai J."/>
            <person name="Kamiya A."/>
            <person name="Meyers C."/>
            <person name="Nakajima M."/>
            <person name="Narusaka M."/>
            <person name="Seki M."/>
            <person name="Sakurai T."/>
            <person name="Satou M."/>
            <person name="Tamse R."/>
            <person name="Vaysberg M."/>
            <person name="Wallender E.K."/>
            <person name="Wong C."/>
            <person name="Yamamura Y."/>
            <person name="Yuan S."/>
            <person name="Shinozaki K."/>
            <person name="Davis R.W."/>
            <person name="Theologis A."/>
            <person name="Ecker J.R."/>
        </authorList>
    </citation>
    <scope>NUCLEOTIDE SEQUENCE [LARGE SCALE MRNA] (ISOFORM 2)</scope>
    <source>
        <strain>cv. Columbia</strain>
    </source>
</reference>
<reference key="4">
    <citation type="journal article" date="2004" name="Genome Res.">
        <title>Whole genome sequence comparisons and 'full-length' cDNA sequences: a combined approach to evaluate and improve Arabidopsis genome annotation.</title>
        <authorList>
            <person name="Castelli V."/>
            <person name="Aury J.-M."/>
            <person name="Jaillon O."/>
            <person name="Wincker P."/>
            <person name="Clepet C."/>
            <person name="Menard M."/>
            <person name="Cruaud C."/>
            <person name="Quetier F."/>
            <person name="Scarpelli C."/>
            <person name="Schaechter V."/>
            <person name="Temple G."/>
            <person name="Caboche M."/>
            <person name="Weissenbach J."/>
            <person name="Salanoubat M."/>
        </authorList>
    </citation>
    <scope>NUCLEOTIDE SEQUENCE [LARGE SCALE MRNA] (ISOFORM 1)</scope>
    <source>
        <strain>cv. Columbia</strain>
    </source>
</reference>
<reference key="5">
    <citation type="journal article" date="2002" name="J. Biol. Chem.">
        <title>Functional cloning and characterization of a plant efflux carrier for multidrug and heavy metal detoxification.</title>
        <authorList>
            <person name="Li L."/>
            <person name="He Z."/>
            <person name="Pandey G.K."/>
            <person name="Tsuchiya T."/>
            <person name="Luan S."/>
        </authorList>
    </citation>
    <scope>GENE FAMILY</scope>
    <scope>NOMENCLATURE</scope>
</reference>
<reference key="6">
    <citation type="journal article" date="2003" name="Eur. J. Biochem.">
        <title>The multidrug/oligosaccharidyl-lipid/polysaccharide (MOP) exporter superfamily.</title>
        <authorList>
            <person name="Hvorup R.N."/>
            <person name="Winnen B."/>
            <person name="Chang A.B."/>
            <person name="Jiang Y."/>
            <person name="Zhou X.F."/>
            <person name="Saier M.H. Jr."/>
        </authorList>
    </citation>
    <scope>GENE FAMILY</scope>
</reference>
<organism>
    <name type="scientific">Arabidopsis thaliana</name>
    <name type="common">Mouse-ear cress</name>
    <dbReference type="NCBI Taxonomy" id="3702"/>
    <lineage>
        <taxon>Eukaryota</taxon>
        <taxon>Viridiplantae</taxon>
        <taxon>Streptophyta</taxon>
        <taxon>Embryophyta</taxon>
        <taxon>Tracheophyta</taxon>
        <taxon>Spermatophyta</taxon>
        <taxon>Magnoliopsida</taxon>
        <taxon>eudicotyledons</taxon>
        <taxon>Gunneridae</taxon>
        <taxon>Pentapetalae</taxon>
        <taxon>rosids</taxon>
        <taxon>malvids</taxon>
        <taxon>Brassicales</taxon>
        <taxon>Brassicaceae</taxon>
        <taxon>Camelineae</taxon>
        <taxon>Arabidopsis</taxon>
    </lineage>
</organism>
<keyword id="KW-0025">Alternative splicing</keyword>
<keyword id="KW-0472">Membrane</keyword>
<keyword id="KW-1185">Reference proteome</keyword>
<keyword id="KW-0812">Transmembrane</keyword>
<keyword id="KW-1133">Transmembrane helix</keyword>
<keyword id="KW-0813">Transport</keyword>
<sequence>MEIPVREERRSSSSSAGPLQQTISLAADDAIDSGPSSPLVVKVSVFETEHETTKLIHAPSTLLGETTGDADFPPIQSFRDAKLVCVVETSKLWEIAAPIAFNILCNYGVNSFTSIFVGHIGDLELSAVAIALSVVSNFSFGFLLGMASALETLCGQAFGAGQMDMLGVYMQRSWLILLGTSVCLLPLYIYATPLLILLGQEPEIAEISGKFTTQIIPQMFALAINFPTQKFLQSQSKVGIMAWIGFFALTLHIFILYLFINVFKWGLNGAAAAFDVSAWGIAIAQVVYVVGWCKDGWKGLSWLAFQDVWPFLKLSFASAVMLCLEIWYFMTIIVLTGHLEDPVIAVGSLSICMNINGWEGMLFIGINAAISVRVSNELGSGHPRAAKYSVIVTVIESLVIGVVCAIVILITRDDFAVIFTESEEMRKAVADLAYLLGITMILNSLQPVISGVAVGGGWQAPVAYINLFCYYAFGLPLGFLLGYKTSLGVQGIWIGMICGTSLQTLILLYMIYITNWNKEVEQASERMKQWGAGYEKLEKIAT</sequence>